<accession>Q87YF6</accession>
<proteinExistence type="inferred from homology"/>
<dbReference type="EMBL" id="AE016853">
    <property type="protein sequence ID" value="AAO57311.1"/>
    <property type="molecule type" value="Genomic_DNA"/>
</dbReference>
<dbReference type="RefSeq" id="NP_793616.1">
    <property type="nucleotide sequence ID" value="NC_004578.1"/>
</dbReference>
<dbReference type="RefSeq" id="WP_003381112.1">
    <property type="nucleotide sequence ID" value="NC_004578.1"/>
</dbReference>
<dbReference type="SMR" id="Q87YF6"/>
<dbReference type="STRING" id="223283.PSPTO_3844"/>
<dbReference type="KEGG" id="pst:PSPTO_3844"/>
<dbReference type="PATRIC" id="fig|223283.9.peg.3941"/>
<dbReference type="eggNOG" id="COG2835">
    <property type="taxonomic scope" value="Bacteria"/>
</dbReference>
<dbReference type="HOGENOM" id="CLU_155659_3_1_6"/>
<dbReference type="OrthoDB" id="9812205at2"/>
<dbReference type="PhylomeDB" id="Q87YF6"/>
<dbReference type="Proteomes" id="UP000002515">
    <property type="component" value="Chromosome"/>
</dbReference>
<dbReference type="GO" id="GO:0005829">
    <property type="term" value="C:cytosol"/>
    <property type="evidence" value="ECO:0007669"/>
    <property type="project" value="TreeGrafter"/>
</dbReference>
<dbReference type="FunFam" id="2.20.25.10:FF:000002">
    <property type="entry name" value="UPF0434 protein YcaR"/>
    <property type="match status" value="1"/>
</dbReference>
<dbReference type="Gene3D" id="2.20.25.10">
    <property type="match status" value="1"/>
</dbReference>
<dbReference type="HAMAP" id="MF_01187">
    <property type="entry name" value="UPF0434"/>
    <property type="match status" value="1"/>
</dbReference>
<dbReference type="InterPro" id="IPR005651">
    <property type="entry name" value="Trm112-like"/>
</dbReference>
<dbReference type="PANTHER" id="PTHR33505:SF4">
    <property type="entry name" value="PROTEIN PREY, MITOCHONDRIAL"/>
    <property type="match status" value="1"/>
</dbReference>
<dbReference type="PANTHER" id="PTHR33505">
    <property type="entry name" value="ZGC:162634"/>
    <property type="match status" value="1"/>
</dbReference>
<dbReference type="Pfam" id="PF03966">
    <property type="entry name" value="Trm112p"/>
    <property type="match status" value="1"/>
</dbReference>
<dbReference type="SUPFAM" id="SSF158997">
    <property type="entry name" value="Trm112p-like"/>
    <property type="match status" value="1"/>
</dbReference>
<reference key="1">
    <citation type="journal article" date="2003" name="Proc. Natl. Acad. Sci. U.S.A.">
        <title>The complete genome sequence of the Arabidopsis and tomato pathogen Pseudomonas syringae pv. tomato DC3000.</title>
        <authorList>
            <person name="Buell C.R."/>
            <person name="Joardar V."/>
            <person name="Lindeberg M."/>
            <person name="Selengut J."/>
            <person name="Paulsen I.T."/>
            <person name="Gwinn M.L."/>
            <person name="Dodson R.J."/>
            <person name="DeBoy R.T."/>
            <person name="Durkin A.S."/>
            <person name="Kolonay J.F."/>
            <person name="Madupu R."/>
            <person name="Daugherty S.C."/>
            <person name="Brinkac L.M."/>
            <person name="Beanan M.J."/>
            <person name="Haft D.H."/>
            <person name="Nelson W.C."/>
            <person name="Davidsen T.M."/>
            <person name="Zafar N."/>
            <person name="Zhou L."/>
            <person name="Liu J."/>
            <person name="Yuan Q."/>
            <person name="Khouri H.M."/>
            <person name="Fedorova N.B."/>
            <person name="Tran B."/>
            <person name="Russell D."/>
            <person name="Berry K.J."/>
            <person name="Utterback T.R."/>
            <person name="Van Aken S.E."/>
            <person name="Feldblyum T.V."/>
            <person name="D'Ascenzo M."/>
            <person name="Deng W.-L."/>
            <person name="Ramos A.R."/>
            <person name="Alfano J.R."/>
            <person name="Cartinhour S."/>
            <person name="Chatterjee A.K."/>
            <person name="Delaney T.P."/>
            <person name="Lazarowitz S.G."/>
            <person name="Martin G.B."/>
            <person name="Schneider D.J."/>
            <person name="Tang X."/>
            <person name="Bender C.L."/>
            <person name="White O."/>
            <person name="Fraser C.M."/>
            <person name="Collmer A."/>
        </authorList>
    </citation>
    <scope>NUCLEOTIDE SEQUENCE [LARGE SCALE GENOMIC DNA]</scope>
    <source>
        <strain>ATCC BAA-871 / DC3000</strain>
    </source>
</reference>
<comment type="similarity">
    <text evidence="1">Belongs to the UPF0434 family.</text>
</comment>
<evidence type="ECO:0000255" key="1">
    <source>
        <dbReference type="HAMAP-Rule" id="MF_01187"/>
    </source>
</evidence>
<protein>
    <recommendedName>
        <fullName evidence="1">UPF0434 protein PSPTO_3844</fullName>
    </recommendedName>
</protein>
<gene>
    <name type="ordered locus">PSPTO_3844</name>
</gene>
<name>Y3844_PSESM</name>
<sequence length="61" mass="6616">MDTKLLDILACPICKGPLKLSADKTELISKGAGLAYPVRDGIPVMLESEARTLTTDERLDK</sequence>
<organism>
    <name type="scientific">Pseudomonas syringae pv. tomato (strain ATCC BAA-871 / DC3000)</name>
    <dbReference type="NCBI Taxonomy" id="223283"/>
    <lineage>
        <taxon>Bacteria</taxon>
        <taxon>Pseudomonadati</taxon>
        <taxon>Pseudomonadota</taxon>
        <taxon>Gammaproteobacteria</taxon>
        <taxon>Pseudomonadales</taxon>
        <taxon>Pseudomonadaceae</taxon>
        <taxon>Pseudomonas</taxon>
    </lineage>
</organism>
<keyword id="KW-1185">Reference proteome</keyword>
<feature type="chain" id="PRO_0000291138" description="UPF0434 protein PSPTO_3844">
    <location>
        <begin position="1"/>
        <end position="61"/>
    </location>
</feature>